<comment type="function">
    <text evidence="1">Myoactive.</text>
</comment>
<comment type="subcellular location">
    <subcellularLocation>
        <location evidence="6">Secreted</location>
    </subcellularLocation>
</comment>
<comment type="similarity">
    <text evidence="2">Belongs to the pyrokinin family.</text>
</comment>
<dbReference type="GO" id="GO:0005576">
    <property type="term" value="C:extracellular region"/>
    <property type="evidence" value="ECO:0007669"/>
    <property type="project" value="UniProtKB-SubCell"/>
</dbReference>
<dbReference type="GO" id="GO:0007218">
    <property type="term" value="P:neuropeptide signaling pathway"/>
    <property type="evidence" value="ECO:0007669"/>
    <property type="project" value="UniProtKB-KW"/>
</dbReference>
<name>PPK1_TYRGL</name>
<protein>
    <recommendedName>
        <fullName evidence="4">Pyrokinin-1</fullName>
        <shortName evidence="4">PK-1</shortName>
    </recommendedName>
    <alternativeName>
        <fullName evidence="1">YXPRL-amide</fullName>
    </alternativeName>
</protein>
<evidence type="ECO:0000250" key="1">
    <source>
        <dbReference type="UniProtKB" id="P82619"/>
    </source>
</evidence>
<evidence type="ECO:0000255" key="2"/>
<evidence type="ECO:0000269" key="3">
    <source>
    </source>
</evidence>
<evidence type="ECO:0000303" key="4">
    <source>
    </source>
</evidence>
<evidence type="ECO:0000305" key="5"/>
<evidence type="ECO:0000305" key="6">
    <source>
    </source>
</evidence>
<feature type="peptide" id="PRO_0000421582" description="Pyrokinin-1" evidence="3">
    <location>
        <begin position="1"/>
        <end position="7"/>
    </location>
</feature>
<feature type="modified residue" description="Leucine amide" evidence="3">
    <location>
        <position position="7"/>
    </location>
</feature>
<organism>
    <name type="scientific">Tyrannophasma gladiator</name>
    <name type="common">Gladiator</name>
    <name type="synonym">Heel-walker</name>
    <dbReference type="NCBI Taxonomy" id="270861"/>
    <lineage>
        <taxon>Eukaryota</taxon>
        <taxon>Metazoa</taxon>
        <taxon>Ecdysozoa</taxon>
        <taxon>Arthropoda</taxon>
        <taxon>Hexapoda</taxon>
        <taxon>Insecta</taxon>
        <taxon>Pterygota</taxon>
        <taxon>Neoptera</taxon>
        <taxon>Polyneoptera</taxon>
        <taxon>Mantophasmatodea</taxon>
        <taxon>Mantophasmatodea incertae sedis</taxon>
        <taxon>Tyrannophasma</taxon>
    </lineage>
</organism>
<sequence length="7" mass="821">DGYTPRL</sequence>
<accession>B3A0I6</accession>
<proteinExistence type="evidence at protein level"/>
<keyword id="KW-0027">Amidation</keyword>
<keyword id="KW-0903">Direct protein sequencing</keyword>
<keyword id="KW-0527">Neuropeptide</keyword>
<keyword id="KW-0964">Secreted</keyword>
<reference evidence="5" key="1">
    <citation type="journal article" date="2012" name="Syst. Biol.">
        <title>Peptidomics-based phylogeny and biogeography of Mantophasmatodea (Hexapoda).</title>
        <authorList>
            <person name="Predel R."/>
            <person name="Neupert S."/>
            <person name="Huetteroth W."/>
            <person name="Kahnt J."/>
            <person name="Waidelich D."/>
            <person name="Roth S."/>
        </authorList>
    </citation>
    <scope>PROTEIN SEQUENCE</scope>
    <scope>AMIDATION AT LEU-7</scope>
    <source>
        <tissue evidence="3">Corpora cardiaca</tissue>
    </source>
</reference>